<dbReference type="EC" id="7.1.1.-" evidence="1"/>
<dbReference type="EMBL" id="CP000440">
    <property type="protein sequence ID" value="ABI87836.1"/>
    <property type="molecule type" value="Genomic_DNA"/>
</dbReference>
<dbReference type="RefSeq" id="WP_006750463.1">
    <property type="nucleotide sequence ID" value="NZ_CP009798.1"/>
</dbReference>
<dbReference type="SMR" id="Q0BDD7"/>
<dbReference type="GeneID" id="93085512"/>
<dbReference type="KEGG" id="bam:Bamb_2280"/>
<dbReference type="PATRIC" id="fig|339670.21.peg.2647"/>
<dbReference type="eggNOG" id="COG1005">
    <property type="taxonomic scope" value="Bacteria"/>
</dbReference>
<dbReference type="Proteomes" id="UP000000662">
    <property type="component" value="Chromosome 1"/>
</dbReference>
<dbReference type="GO" id="GO:0005886">
    <property type="term" value="C:plasma membrane"/>
    <property type="evidence" value="ECO:0007669"/>
    <property type="project" value="UniProtKB-SubCell"/>
</dbReference>
<dbReference type="GO" id="GO:0003954">
    <property type="term" value="F:NADH dehydrogenase activity"/>
    <property type="evidence" value="ECO:0007669"/>
    <property type="project" value="TreeGrafter"/>
</dbReference>
<dbReference type="GO" id="GO:0016655">
    <property type="term" value="F:oxidoreductase activity, acting on NAD(P)H, quinone or similar compound as acceptor"/>
    <property type="evidence" value="ECO:0007669"/>
    <property type="project" value="UniProtKB-UniRule"/>
</dbReference>
<dbReference type="GO" id="GO:0048038">
    <property type="term" value="F:quinone binding"/>
    <property type="evidence" value="ECO:0007669"/>
    <property type="project" value="UniProtKB-KW"/>
</dbReference>
<dbReference type="GO" id="GO:0009060">
    <property type="term" value="P:aerobic respiration"/>
    <property type="evidence" value="ECO:0007669"/>
    <property type="project" value="TreeGrafter"/>
</dbReference>
<dbReference type="HAMAP" id="MF_01350">
    <property type="entry name" value="NDH1_NuoH"/>
    <property type="match status" value="1"/>
</dbReference>
<dbReference type="InterPro" id="IPR001694">
    <property type="entry name" value="NADH_UbQ_OxRdtase_su1/FPO"/>
</dbReference>
<dbReference type="InterPro" id="IPR018086">
    <property type="entry name" value="NADH_UbQ_OxRdtase_su1_CS"/>
</dbReference>
<dbReference type="NCBIfam" id="NF004741">
    <property type="entry name" value="PRK06076.1-2"/>
    <property type="match status" value="1"/>
</dbReference>
<dbReference type="NCBIfam" id="NF004742">
    <property type="entry name" value="PRK06076.1-3"/>
    <property type="match status" value="1"/>
</dbReference>
<dbReference type="PANTHER" id="PTHR11432">
    <property type="entry name" value="NADH DEHYDROGENASE SUBUNIT 1"/>
    <property type="match status" value="1"/>
</dbReference>
<dbReference type="PANTHER" id="PTHR11432:SF3">
    <property type="entry name" value="NADH-UBIQUINONE OXIDOREDUCTASE CHAIN 1"/>
    <property type="match status" value="1"/>
</dbReference>
<dbReference type="Pfam" id="PF00146">
    <property type="entry name" value="NADHdh"/>
    <property type="match status" value="1"/>
</dbReference>
<dbReference type="PROSITE" id="PS00668">
    <property type="entry name" value="COMPLEX1_ND1_2"/>
    <property type="match status" value="1"/>
</dbReference>
<gene>
    <name evidence="1" type="primary">nuoH</name>
    <name type="ordered locus">Bamb_2280</name>
</gene>
<evidence type="ECO:0000255" key="1">
    <source>
        <dbReference type="HAMAP-Rule" id="MF_01350"/>
    </source>
</evidence>
<protein>
    <recommendedName>
        <fullName evidence="1">NADH-quinone oxidoreductase subunit H</fullName>
        <ecNumber evidence="1">7.1.1.-</ecNumber>
    </recommendedName>
    <alternativeName>
        <fullName evidence="1">NADH dehydrogenase I subunit H</fullName>
    </alternativeName>
    <alternativeName>
        <fullName evidence="1">NDH-1 subunit H</fullName>
    </alternativeName>
</protein>
<organism>
    <name type="scientific">Burkholderia ambifaria (strain ATCC BAA-244 / DSM 16087 / CCUG 44356 / LMG 19182 / AMMD)</name>
    <name type="common">Burkholderia cepacia (strain AMMD)</name>
    <dbReference type="NCBI Taxonomy" id="339670"/>
    <lineage>
        <taxon>Bacteria</taxon>
        <taxon>Pseudomonadati</taxon>
        <taxon>Pseudomonadota</taxon>
        <taxon>Betaproteobacteria</taxon>
        <taxon>Burkholderiales</taxon>
        <taxon>Burkholderiaceae</taxon>
        <taxon>Burkholderia</taxon>
        <taxon>Burkholderia cepacia complex</taxon>
    </lineage>
</organism>
<comment type="function">
    <text evidence="1">NDH-1 shuttles electrons from NADH, via FMN and iron-sulfur (Fe-S) centers, to quinones in the respiratory chain. The immediate electron acceptor for the enzyme in this species is believed to be ubiquinone. Couples the redox reaction to proton translocation (for every two electrons transferred, four hydrogen ions are translocated across the cytoplasmic membrane), and thus conserves the redox energy in a proton gradient. This subunit may bind ubiquinone.</text>
</comment>
<comment type="catalytic activity">
    <reaction evidence="1">
        <text>a quinone + NADH + 5 H(+)(in) = a quinol + NAD(+) + 4 H(+)(out)</text>
        <dbReference type="Rhea" id="RHEA:57888"/>
        <dbReference type="ChEBI" id="CHEBI:15378"/>
        <dbReference type="ChEBI" id="CHEBI:24646"/>
        <dbReference type="ChEBI" id="CHEBI:57540"/>
        <dbReference type="ChEBI" id="CHEBI:57945"/>
        <dbReference type="ChEBI" id="CHEBI:132124"/>
    </reaction>
</comment>
<comment type="subunit">
    <text evidence="1">NDH-1 is composed of 14 different subunits. Subunits NuoA, H, J, K, L, M, N constitute the membrane sector of the complex.</text>
</comment>
<comment type="subcellular location">
    <subcellularLocation>
        <location evidence="1">Cell inner membrane</location>
        <topology evidence="1">Multi-pass membrane protein</topology>
    </subcellularLocation>
</comment>
<comment type="similarity">
    <text evidence="1">Belongs to the complex I subunit 1 family.</text>
</comment>
<sequence length="355" mass="39209">MSLFDTINAGGAQLLGIAWPTVWAIVRILVVAVVILLCVAYLILWERKLIGWMHVRLGPNRVGPAGLLQPIADVLKLLLKEVIQPSAASRWLYLIAPVMTVVPAFAVWAVIPFQAEAVLANVNAGLLYAMAISSIGVYAVILAGWASNSKYAFLGAMRAAAQMVSYEISMGFALVLVLMTAGSLNLSEIVGSQQHGFFAGHGVNFLSWNWLPLLPAFVVYFVSGIAETNRHPFDVVEGESEIVAGHMIDYSGMAFALFFLAEYINMIVISALAATLFLGGWDAPFEFLSFIPGVFWLVLKVFALLSVFIWVRATFPRYRYDQIMRLGWKVFLPVTVIWVVVVGFWMMSPLNIWVK</sequence>
<reference key="1">
    <citation type="submission" date="2006-08" db="EMBL/GenBank/DDBJ databases">
        <title>Complete sequence of chromosome 1 of Burkholderia cepacia AMMD.</title>
        <authorList>
            <person name="Copeland A."/>
            <person name="Lucas S."/>
            <person name="Lapidus A."/>
            <person name="Barry K."/>
            <person name="Detter J.C."/>
            <person name="Glavina del Rio T."/>
            <person name="Hammon N."/>
            <person name="Israni S."/>
            <person name="Pitluck S."/>
            <person name="Bruce D."/>
            <person name="Chain P."/>
            <person name="Malfatti S."/>
            <person name="Shin M."/>
            <person name="Vergez L."/>
            <person name="Schmutz J."/>
            <person name="Larimer F."/>
            <person name="Land M."/>
            <person name="Hauser L."/>
            <person name="Kyrpides N."/>
            <person name="Kim E."/>
            <person name="Parke J."/>
            <person name="Coenye T."/>
            <person name="Konstantinidis K."/>
            <person name="Ramette A."/>
            <person name="Tiedje J."/>
            <person name="Richardson P."/>
        </authorList>
    </citation>
    <scope>NUCLEOTIDE SEQUENCE [LARGE SCALE GENOMIC DNA]</scope>
    <source>
        <strain>ATCC BAA-244 / DSM 16087 / CCUG 44356 / LMG 19182 / AMMD</strain>
    </source>
</reference>
<name>NUOH_BURCM</name>
<accession>Q0BDD7</accession>
<feature type="chain" id="PRO_0000298800" description="NADH-quinone oxidoreductase subunit H">
    <location>
        <begin position="1"/>
        <end position="355"/>
    </location>
</feature>
<feature type="transmembrane region" description="Helical" evidence="1">
    <location>
        <begin position="25"/>
        <end position="45"/>
    </location>
</feature>
<feature type="transmembrane region" description="Helical" evidence="1">
    <location>
        <begin position="91"/>
        <end position="111"/>
    </location>
</feature>
<feature type="transmembrane region" description="Helical" evidence="1">
    <location>
        <begin position="126"/>
        <end position="146"/>
    </location>
</feature>
<feature type="transmembrane region" description="Helical" evidence="1">
    <location>
        <begin position="170"/>
        <end position="190"/>
    </location>
</feature>
<feature type="transmembrane region" description="Helical" evidence="1">
    <location>
        <begin position="205"/>
        <end position="225"/>
    </location>
</feature>
<feature type="transmembrane region" description="Helical" evidence="1">
    <location>
        <begin position="253"/>
        <end position="273"/>
    </location>
</feature>
<feature type="transmembrane region" description="Helical" evidence="1">
    <location>
        <begin position="290"/>
        <end position="310"/>
    </location>
</feature>
<feature type="transmembrane region" description="Helical" evidence="1">
    <location>
        <begin position="330"/>
        <end position="350"/>
    </location>
</feature>
<keyword id="KW-0997">Cell inner membrane</keyword>
<keyword id="KW-1003">Cell membrane</keyword>
<keyword id="KW-0472">Membrane</keyword>
<keyword id="KW-0520">NAD</keyword>
<keyword id="KW-0874">Quinone</keyword>
<keyword id="KW-1278">Translocase</keyword>
<keyword id="KW-0812">Transmembrane</keyword>
<keyword id="KW-1133">Transmembrane helix</keyword>
<keyword id="KW-0830">Ubiquinone</keyword>
<proteinExistence type="inferred from homology"/>